<reference key="1">
    <citation type="journal article" date="2016" name="Front. Microbiol.">
        <title>The complete genome sequence of hyperthermophile Dictyoglomus turgidum DSM 6724 reveals a specialized carbohydrate fermentor.</title>
        <authorList>
            <person name="Brumm P.J."/>
            <person name="Gowda K."/>
            <person name="Robb F.T."/>
            <person name="Mead D.A."/>
        </authorList>
    </citation>
    <scope>NUCLEOTIDE SEQUENCE [LARGE SCALE GENOMIC DNA]</scope>
    <source>
        <strain>DSM 6724 / Z-1310</strain>
    </source>
</reference>
<accession>B8E0K2</accession>
<feature type="chain" id="PRO_1000141395" description="Large ribosomal subunit protein uL1">
    <location>
        <begin position="1"/>
        <end position="242"/>
    </location>
</feature>
<name>RL1_DICTD</name>
<evidence type="ECO:0000255" key="1">
    <source>
        <dbReference type="HAMAP-Rule" id="MF_01318"/>
    </source>
</evidence>
<evidence type="ECO:0000305" key="2"/>
<sequence>MAKRGKRYQQLLSLIEKGRLYSPKEAVSLVKKLATAKFDETINLAVRLGVDPRHADQQVRGTVVLPYGTGKEKKVLVFAEGEKAQEAREAGADYVGGEDLVKQIESGWLDFDVAIATPDIMGTLKIPSRLGKILGPRGLMPNPKTGTVTNDIAKAVKEYKAGRVEFRTDRYGIVHVPIGKASFSEEALYKNLMTVLGTLLRLKPAAAKGQYFKSIYISPSMGPSVPIDTKNIADLVKQEEAA</sequence>
<proteinExistence type="inferred from homology"/>
<organism>
    <name type="scientific">Dictyoglomus turgidum (strain DSM 6724 / Z-1310)</name>
    <dbReference type="NCBI Taxonomy" id="515635"/>
    <lineage>
        <taxon>Bacteria</taxon>
        <taxon>Pseudomonadati</taxon>
        <taxon>Dictyoglomota</taxon>
        <taxon>Dictyoglomia</taxon>
        <taxon>Dictyoglomales</taxon>
        <taxon>Dictyoglomaceae</taxon>
        <taxon>Dictyoglomus</taxon>
    </lineage>
</organism>
<keyword id="KW-1185">Reference proteome</keyword>
<keyword id="KW-0678">Repressor</keyword>
<keyword id="KW-0687">Ribonucleoprotein</keyword>
<keyword id="KW-0689">Ribosomal protein</keyword>
<keyword id="KW-0694">RNA-binding</keyword>
<keyword id="KW-0699">rRNA-binding</keyword>
<keyword id="KW-0810">Translation regulation</keyword>
<keyword id="KW-0820">tRNA-binding</keyword>
<gene>
    <name evidence="1" type="primary">rplA</name>
    <name type="ordered locus">Dtur_1373</name>
</gene>
<comment type="function">
    <text evidence="1">Binds directly to 23S rRNA. The L1 stalk is quite mobile in the ribosome, and is involved in E site tRNA release.</text>
</comment>
<comment type="function">
    <text evidence="1">Protein L1 is also a translational repressor protein, it controls the translation of the L11 operon by binding to its mRNA.</text>
</comment>
<comment type="subunit">
    <text evidence="1">Part of the 50S ribosomal subunit.</text>
</comment>
<comment type="similarity">
    <text evidence="1">Belongs to the universal ribosomal protein uL1 family.</text>
</comment>
<dbReference type="EMBL" id="CP001251">
    <property type="protein sequence ID" value="ACK42647.1"/>
    <property type="molecule type" value="Genomic_DNA"/>
</dbReference>
<dbReference type="RefSeq" id="WP_012583727.1">
    <property type="nucleotide sequence ID" value="NC_011661.1"/>
</dbReference>
<dbReference type="RefSeq" id="YP_002353261.1">
    <property type="nucleotide sequence ID" value="NC_011661.1"/>
</dbReference>
<dbReference type="SMR" id="B8E0K2"/>
<dbReference type="FunCoup" id="B8E0K2">
    <property type="interactions" value="441"/>
</dbReference>
<dbReference type="STRING" id="515635.Dtur_1373"/>
<dbReference type="EnsemblBacteria" id="ACK42647">
    <property type="protein sequence ID" value="ACK42647"/>
    <property type="gene ID" value="Dtur_1373"/>
</dbReference>
<dbReference type="KEGG" id="dtu:Dtur_1373"/>
<dbReference type="PATRIC" id="fig|515635.4.peg.1418"/>
<dbReference type="eggNOG" id="COG0081">
    <property type="taxonomic scope" value="Bacteria"/>
</dbReference>
<dbReference type="HOGENOM" id="CLU_062853_0_0_0"/>
<dbReference type="InParanoid" id="B8E0K2"/>
<dbReference type="OrthoDB" id="9803740at2"/>
<dbReference type="Proteomes" id="UP000007719">
    <property type="component" value="Chromosome"/>
</dbReference>
<dbReference type="GO" id="GO:0015934">
    <property type="term" value="C:large ribosomal subunit"/>
    <property type="evidence" value="ECO:0007669"/>
    <property type="project" value="InterPro"/>
</dbReference>
<dbReference type="GO" id="GO:0019843">
    <property type="term" value="F:rRNA binding"/>
    <property type="evidence" value="ECO:0007669"/>
    <property type="project" value="UniProtKB-UniRule"/>
</dbReference>
<dbReference type="GO" id="GO:0003735">
    <property type="term" value="F:structural constituent of ribosome"/>
    <property type="evidence" value="ECO:0007669"/>
    <property type="project" value="InterPro"/>
</dbReference>
<dbReference type="GO" id="GO:0000049">
    <property type="term" value="F:tRNA binding"/>
    <property type="evidence" value="ECO:0007669"/>
    <property type="project" value="UniProtKB-KW"/>
</dbReference>
<dbReference type="GO" id="GO:0006417">
    <property type="term" value="P:regulation of translation"/>
    <property type="evidence" value="ECO:0007669"/>
    <property type="project" value="UniProtKB-KW"/>
</dbReference>
<dbReference type="GO" id="GO:0006412">
    <property type="term" value="P:translation"/>
    <property type="evidence" value="ECO:0007669"/>
    <property type="project" value="UniProtKB-UniRule"/>
</dbReference>
<dbReference type="CDD" id="cd00403">
    <property type="entry name" value="Ribosomal_L1"/>
    <property type="match status" value="1"/>
</dbReference>
<dbReference type="FunFam" id="3.40.50.790:FF:000001">
    <property type="entry name" value="50S ribosomal protein L1"/>
    <property type="match status" value="1"/>
</dbReference>
<dbReference type="Gene3D" id="3.30.190.20">
    <property type="match status" value="1"/>
</dbReference>
<dbReference type="Gene3D" id="3.40.50.790">
    <property type="match status" value="1"/>
</dbReference>
<dbReference type="HAMAP" id="MF_01318_B">
    <property type="entry name" value="Ribosomal_uL1_B"/>
    <property type="match status" value="1"/>
</dbReference>
<dbReference type="InterPro" id="IPR005878">
    <property type="entry name" value="Ribosom_uL1_bac-type"/>
</dbReference>
<dbReference type="InterPro" id="IPR002143">
    <property type="entry name" value="Ribosomal_uL1"/>
</dbReference>
<dbReference type="InterPro" id="IPR023674">
    <property type="entry name" value="Ribosomal_uL1-like"/>
</dbReference>
<dbReference type="InterPro" id="IPR028364">
    <property type="entry name" value="Ribosomal_uL1/biogenesis"/>
</dbReference>
<dbReference type="InterPro" id="IPR016095">
    <property type="entry name" value="Ribosomal_uL1_3-a/b-sand"/>
</dbReference>
<dbReference type="NCBIfam" id="TIGR01169">
    <property type="entry name" value="rplA_bact"/>
    <property type="match status" value="1"/>
</dbReference>
<dbReference type="PANTHER" id="PTHR36427">
    <property type="entry name" value="54S RIBOSOMAL PROTEIN L1, MITOCHONDRIAL"/>
    <property type="match status" value="1"/>
</dbReference>
<dbReference type="PANTHER" id="PTHR36427:SF3">
    <property type="entry name" value="LARGE RIBOSOMAL SUBUNIT PROTEIN UL1M"/>
    <property type="match status" value="1"/>
</dbReference>
<dbReference type="Pfam" id="PF00687">
    <property type="entry name" value="Ribosomal_L1"/>
    <property type="match status" value="1"/>
</dbReference>
<dbReference type="PIRSF" id="PIRSF002155">
    <property type="entry name" value="Ribosomal_L1"/>
    <property type="match status" value="1"/>
</dbReference>
<dbReference type="SUPFAM" id="SSF56808">
    <property type="entry name" value="Ribosomal protein L1"/>
    <property type="match status" value="1"/>
</dbReference>
<protein>
    <recommendedName>
        <fullName evidence="1">Large ribosomal subunit protein uL1</fullName>
    </recommendedName>
    <alternativeName>
        <fullName evidence="2">50S ribosomal protein L1</fullName>
    </alternativeName>
</protein>